<reference key="1">
    <citation type="journal article" date="2003" name="Nat. Biotechnol.">
        <title>The genome sequence of the entomopathogenic bacterium Photorhabdus luminescens.</title>
        <authorList>
            <person name="Duchaud E."/>
            <person name="Rusniok C."/>
            <person name="Frangeul L."/>
            <person name="Buchrieser C."/>
            <person name="Givaudan A."/>
            <person name="Taourit S."/>
            <person name="Bocs S."/>
            <person name="Boursaux-Eude C."/>
            <person name="Chandler M."/>
            <person name="Charles J.-F."/>
            <person name="Dassa E."/>
            <person name="Derose R."/>
            <person name="Derzelle S."/>
            <person name="Freyssinet G."/>
            <person name="Gaudriault S."/>
            <person name="Medigue C."/>
            <person name="Lanois A."/>
            <person name="Powell K."/>
            <person name="Siguier P."/>
            <person name="Vincent R."/>
            <person name="Wingate V."/>
            <person name="Zouine M."/>
            <person name="Glaser P."/>
            <person name="Boemare N."/>
            <person name="Danchin A."/>
            <person name="Kunst F."/>
        </authorList>
    </citation>
    <scope>NUCLEOTIDE SEQUENCE [LARGE SCALE GENOMIC DNA]</scope>
    <source>
        <strain>DSM 15139 / CIP 105565 / TT01</strain>
    </source>
</reference>
<keyword id="KW-0030">Aminoacyl-tRNA synthetase</keyword>
<keyword id="KW-0067">ATP-binding</keyword>
<keyword id="KW-0963">Cytoplasm</keyword>
<keyword id="KW-0436">Ligase</keyword>
<keyword id="KW-0479">Metal-binding</keyword>
<keyword id="KW-0547">Nucleotide-binding</keyword>
<keyword id="KW-0648">Protein biosynthesis</keyword>
<keyword id="KW-1185">Reference proteome</keyword>
<keyword id="KW-0694">RNA-binding</keyword>
<keyword id="KW-0820">tRNA-binding</keyword>
<keyword id="KW-0862">Zinc</keyword>
<comment type="function">
    <text evidence="1">Is required not only for elongation of protein synthesis but also for the initiation of all mRNA translation through initiator tRNA(fMet) aminoacylation.</text>
</comment>
<comment type="catalytic activity">
    <reaction evidence="1">
        <text>tRNA(Met) + L-methionine + ATP = L-methionyl-tRNA(Met) + AMP + diphosphate</text>
        <dbReference type="Rhea" id="RHEA:13481"/>
        <dbReference type="Rhea" id="RHEA-COMP:9667"/>
        <dbReference type="Rhea" id="RHEA-COMP:9698"/>
        <dbReference type="ChEBI" id="CHEBI:30616"/>
        <dbReference type="ChEBI" id="CHEBI:33019"/>
        <dbReference type="ChEBI" id="CHEBI:57844"/>
        <dbReference type="ChEBI" id="CHEBI:78442"/>
        <dbReference type="ChEBI" id="CHEBI:78530"/>
        <dbReference type="ChEBI" id="CHEBI:456215"/>
        <dbReference type="EC" id="6.1.1.10"/>
    </reaction>
</comment>
<comment type="cofactor">
    <cofactor evidence="1">
        <name>Zn(2+)</name>
        <dbReference type="ChEBI" id="CHEBI:29105"/>
    </cofactor>
    <text evidence="1">Binds 1 zinc ion per subunit.</text>
</comment>
<comment type="subunit">
    <text evidence="1">Homodimer.</text>
</comment>
<comment type="subcellular location">
    <subcellularLocation>
        <location evidence="1">Cytoplasm</location>
    </subcellularLocation>
</comment>
<comment type="similarity">
    <text evidence="1">Belongs to the class-I aminoacyl-tRNA synthetase family. MetG type 1 subfamily.</text>
</comment>
<accession>Q7N6J6</accession>
<name>SYM_PHOLL</name>
<feature type="chain" id="PRO_0000139150" description="Methionine--tRNA ligase">
    <location>
        <begin position="1"/>
        <end position="675"/>
    </location>
</feature>
<feature type="domain" description="tRNA-binding" evidence="1">
    <location>
        <begin position="573"/>
        <end position="675"/>
    </location>
</feature>
<feature type="short sequence motif" description="'HIGH' region">
    <location>
        <begin position="15"/>
        <end position="25"/>
    </location>
</feature>
<feature type="short sequence motif" description="'KMSKS' region">
    <location>
        <begin position="332"/>
        <end position="336"/>
    </location>
</feature>
<feature type="binding site" evidence="1">
    <location>
        <position position="146"/>
    </location>
    <ligand>
        <name>Zn(2+)</name>
        <dbReference type="ChEBI" id="CHEBI:29105"/>
    </ligand>
</feature>
<feature type="binding site" evidence="1">
    <location>
        <position position="149"/>
    </location>
    <ligand>
        <name>Zn(2+)</name>
        <dbReference type="ChEBI" id="CHEBI:29105"/>
    </ligand>
</feature>
<feature type="binding site" evidence="1">
    <location>
        <position position="159"/>
    </location>
    <ligand>
        <name>Zn(2+)</name>
        <dbReference type="ChEBI" id="CHEBI:29105"/>
    </ligand>
</feature>
<feature type="binding site" evidence="1">
    <location>
        <position position="162"/>
    </location>
    <ligand>
        <name>Zn(2+)</name>
        <dbReference type="ChEBI" id="CHEBI:29105"/>
    </ligand>
</feature>
<feature type="binding site" evidence="1">
    <location>
        <position position="335"/>
    </location>
    <ligand>
        <name>ATP</name>
        <dbReference type="ChEBI" id="CHEBI:30616"/>
    </ligand>
</feature>
<proteinExistence type="inferred from homology"/>
<dbReference type="EC" id="6.1.1.10" evidence="1"/>
<dbReference type="EMBL" id="BX571864">
    <property type="protein sequence ID" value="CAE13847.1"/>
    <property type="molecule type" value="Genomic_DNA"/>
</dbReference>
<dbReference type="RefSeq" id="WP_011145851.1">
    <property type="nucleotide sequence ID" value="NC_005126.1"/>
</dbReference>
<dbReference type="SMR" id="Q7N6J6"/>
<dbReference type="STRING" id="243265.plu1554"/>
<dbReference type="GeneID" id="48847841"/>
<dbReference type="KEGG" id="plu:plu1554"/>
<dbReference type="eggNOG" id="COG0073">
    <property type="taxonomic scope" value="Bacteria"/>
</dbReference>
<dbReference type="eggNOG" id="COG0143">
    <property type="taxonomic scope" value="Bacteria"/>
</dbReference>
<dbReference type="HOGENOM" id="CLU_009710_7_0_6"/>
<dbReference type="OrthoDB" id="9810191at2"/>
<dbReference type="Proteomes" id="UP000002514">
    <property type="component" value="Chromosome"/>
</dbReference>
<dbReference type="GO" id="GO:0005829">
    <property type="term" value="C:cytosol"/>
    <property type="evidence" value="ECO:0007669"/>
    <property type="project" value="TreeGrafter"/>
</dbReference>
<dbReference type="GO" id="GO:0005524">
    <property type="term" value="F:ATP binding"/>
    <property type="evidence" value="ECO:0007669"/>
    <property type="project" value="UniProtKB-UniRule"/>
</dbReference>
<dbReference type="GO" id="GO:0046872">
    <property type="term" value="F:metal ion binding"/>
    <property type="evidence" value="ECO:0007669"/>
    <property type="project" value="UniProtKB-KW"/>
</dbReference>
<dbReference type="GO" id="GO:0004825">
    <property type="term" value="F:methionine-tRNA ligase activity"/>
    <property type="evidence" value="ECO:0007669"/>
    <property type="project" value="UniProtKB-UniRule"/>
</dbReference>
<dbReference type="GO" id="GO:0000049">
    <property type="term" value="F:tRNA binding"/>
    <property type="evidence" value="ECO:0007669"/>
    <property type="project" value="UniProtKB-KW"/>
</dbReference>
<dbReference type="GO" id="GO:0006431">
    <property type="term" value="P:methionyl-tRNA aminoacylation"/>
    <property type="evidence" value="ECO:0007669"/>
    <property type="project" value="UniProtKB-UniRule"/>
</dbReference>
<dbReference type="CDD" id="cd07957">
    <property type="entry name" value="Anticodon_Ia_Met"/>
    <property type="match status" value="1"/>
</dbReference>
<dbReference type="CDD" id="cd00814">
    <property type="entry name" value="MetRS_core"/>
    <property type="match status" value="1"/>
</dbReference>
<dbReference type="CDD" id="cd02800">
    <property type="entry name" value="tRNA_bind_EcMetRS_like"/>
    <property type="match status" value="1"/>
</dbReference>
<dbReference type="FunFam" id="1.10.730.10:FF:000005">
    <property type="entry name" value="Methionine--tRNA ligase"/>
    <property type="match status" value="1"/>
</dbReference>
<dbReference type="FunFam" id="2.20.28.20:FF:000001">
    <property type="entry name" value="Methionine--tRNA ligase"/>
    <property type="match status" value="1"/>
</dbReference>
<dbReference type="FunFam" id="2.40.50.140:FF:000042">
    <property type="entry name" value="Methionine--tRNA ligase"/>
    <property type="match status" value="1"/>
</dbReference>
<dbReference type="Gene3D" id="3.40.50.620">
    <property type="entry name" value="HUPs"/>
    <property type="match status" value="1"/>
</dbReference>
<dbReference type="Gene3D" id="1.10.730.10">
    <property type="entry name" value="Isoleucyl-tRNA Synthetase, Domain 1"/>
    <property type="match status" value="1"/>
</dbReference>
<dbReference type="Gene3D" id="2.20.28.20">
    <property type="entry name" value="Methionyl-tRNA synthetase, Zn-domain"/>
    <property type="match status" value="1"/>
</dbReference>
<dbReference type="Gene3D" id="2.40.50.140">
    <property type="entry name" value="Nucleic acid-binding proteins"/>
    <property type="match status" value="1"/>
</dbReference>
<dbReference type="HAMAP" id="MF_00098">
    <property type="entry name" value="Met_tRNA_synth_type1"/>
    <property type="match status" value="1"/>
</dbReference>
<dbReference type="InterPro" id="IPR001412">
    <property type="entry name" value="aa-tRNA-synth_I_CS"/>
</dbReference>
<dbReference type="InterPro" id="IPR041872">
    <property type="entry name" value="Anticodon_Met"/>
</dbReference>
<dbReference type="InterPro" id="IPR004495">
    <property type="entry name" value="Met-tRNA-synth_bsu_C"/>
</dbReference>
<dbReference type="InterPro" id="IPR023458">
    <property type="entry name" value="Met-tRNA_ligase_1"/>
</dbReference>
<dbReference type="InterPro" id="IPR014758">
    <property type="entry name" value="Met-tRNA_synth"/>
</dbReference>
<dbReference type="InterPro" id="IPR015413">
    <property type="entry name" value="Methionyl/Leucyl_tRNA_Synth"/>
</dbReference>
<dbReference type="InterPro" id="IPR033911">
    <property type="entry name" value="MetRS_core"/>
</dbReference>
<dbReference type="InterPro" id="IPR029038">
    <property type="entry name" value="MetRS_Zn"/>
</dbReference>
<dbReference type="InterPro" id="IPR012340">
    <property type="entry name" value="NA-bd_OB-fold"/>
</dbReference>
<dbReference type="InterPro" id="IPR014729">
    <property type="entry name" value="Rossmann-like_a/b/a_fold"/>
</dbReference>
<dbReference type="InterPro" id="IPR002547">
    <property type="entry name" value="tRNA-bd_dom"/>
</dbReference>
<dbReference type="InterPro" id="IPR009080">
    <property type="entry name" value="tRNAsynth_Ia_anticodon-bd"/>
</dbReference>
<dbReference type="NCBIfam" id="TIGR00398">
    <property type="entry name" value="metG"/>
    <property type="match status" value="1"/>
</dbReference>
<dbReference type="NCBIfam" id="TIGR00399">
    <property type="entry name" value="metG_C_term"/>
    <property type="match status" value="1"/>
</dbReference>
<dbReference type="NCBIfam" id="NF001100">
    <property type="entry name" value="PRK00133.1"/>
    <property type="match status" value="1"/>
</dbReference>
<dbReference type="PANTHER" id="PTHR45765">
    <property type="entry name" value="METHIONINE--TRNA LIGASE"/>
    <property type="match status" value="1"/>
</dbReference>
<dbReference type="PANTHER" id="PTHR45765:SF1">
    <property type="entry name" value="METHIONINE--TRNA LIGASE, CYTOPLASMIC"/>
    <property type="match status" value="1"/>
</dbReference>
<dbReference type="Pfam" id="PF19303">
    <property type="entry name" value="Anticodon_3"/>
    <property type="match status" value="1"/>
</dbReference>
<dbReference type="Pfam" id="PF09334">
    <property type="entry name" value="tRNA-synt_1g"/>
    <property type="match status" value="1"/>
</dbReference>
<dbReference type="Pfam" id="PF01588">
    <property type="entry name" value="tRNA_bind"/>
    <property type="match status" value="1"/>
</dbReference>
<dbReference type="PRINTS" id="PR01041">
    <property type="entry name" value="TRNASYNTHMET"/>
</dbReference>
<dbReference type="SUPFAM" id="SSF47323">
    <property type="entry name" value="Anticodon-binding domain of a subclass of class I aminoacyl-tRNA synthetases"/>
    <property type="match status" value="1"/>
</dbReference>
<dbReference type="SUPFAM" id="SSF57770">
    <property type="entry name" value="Methionyl-tRNA synthetase (MetRS), Zn-domain"/>
    <property type="match status" value="1"/>
</dbReference>
<dbReference type="SUPFAM" id="SSF50249">
    <property type="entry name" value="Nucleic acid-binding proteins"/>
    <property type="match status" value="1"/>
</dbReference>
<dbReference type="SUPFAM" id="SSF52374">
    <property type="entry name" value="Nucleotidylyl transferase"/>
    <property type="match status" value="1"/>
</dbReference>
<dbReference type="PROSITE" id="PS00178">
    <property type="entry name" value="AA_TRNA_LIGASE_I"/>
    <property type="match status" value="1"/>
</dbReference>
<dbReference type="PROSITE" id="PS50886">
    <property type="entry name" value="TRBD"/>
    <property type="match status" value="1"/>
</dbReference>
<organism>
    <name type="scientific">Photorhabdus laumondii subsp. laumondii (strain DSM 15139 / CIP 105565 / TT01)</name>
    <name type="common">Photorhabdus luminescens subsp. laumondii</name>
    <dbReference type="NCBI Taxonomy" id="243265"/>
    <lineage>
        <taxon>Bacteria</taxon>
        <taxon>Pseudomonadati</taxon>
        <taxon>Pseudomonadota</taxon>
        <taxon>Gammaproteobacteria</taxon>
        <taxon>Enterobacterales</taxon>
        <taxon>Morganellaceae</taxon>
        <taxon>Photorhabdus</taxon>
    </lineage>
</organism>
<evidence type="ECO:0000255" key="1">
    <source>
        <dbReference type="HAMAP-Rule" id="MF_00098"/>
    </source>
</evidence>
<gene>
    <name evidence="1" type="primary">metG</name>
    <name type="ordered locus">plu1554</name>
</gene>
<sequence>MSQVAKKLLVTCALPYANGPIHLGHMLEHIQADIWVRFQRMRGKEVHFICADDAHGTPIMLKAQQMGIAPEEMIATVNQEHHQDFTGFSVSYDNYHSTHSEENQTLSTKIYLELKKNGHIKNRTISQLYDPEKNMFLPDRFVKGSCPKCKAEDQYGDNCEVCGSTYSPTELINPRSAVSGATPEMRETEHFFFDLPAFSDMLQAWTRSGALQEQVANKMQEWFESGLQQWDITRDAPYFGFEIPDAPGKYFYVWLDAPIGYMGSFQNLCDKRGNLNFDEFWAKDSTADLYHFIGKDIVYFHSLFWPAMLEGSGYRKPTNVFVHGYVTVNGAKMSKSRGTFIKASTYLDHLDADCLRYYYAAKLSARIDDIDLNLEDFVQRVNSDIVNKVVNLASRNAGFINKRFNGKLADKLADPALYQQFIDGAKVIAEEFNNREFSKAIREIMALADLANRYVDEQAPWVVAKEEGRDADLQAICSMGINLFRVLMTFLKPVLPSLAERAEAFLNTELTWHGIEQPLLDHQVSAFKALFNRIDMDKVDAMVVASKESINTPQKVSGPLAEDPIQDTITFDDFAKVDMRVALIKQADFVEGSDKLLKLMLDLGGETRQVFSGIRSSYPDPKALEGRLTIMVANLAPRKMRFGISEGMVMAAGPGGKDIFLLSPDSGAQPGMQVK</sequence>
<protein>
    <recommendedName>
        <fullName evidence="1">Methionine--tRNA ligase</fullName>
        <ecNumber evidence="1">6.1.1.10</ecNumber>
    </recommendedName>
    <alternativeName>
        <fullName evidence="1">Methionyl-tRNA synthetase</fullName>
        <shortName evidence="1">MetRS</shortName>
    </alternativeName>
</protein>